<comment type="similarity">
    <text evidence="1">Belongs to the bacterial ribosomal protein bL34 family.</text>
</comment>
<protein>
    <recommendedName>
        <fullName evidence="1">Large ribosomal subunit protein bL34</fullName>
    </recommendedName>
    <alternativeName>
        <fullName evidence="2">50S ribosomal protein L34</fullName>
    </alternativeName>
</protein>
<proteinExistence type="inferred from homology"/>
<gene>
    <name evidence="1" type="primary">rpmH</name>
    <name type="ordered locus">SeAg_B4067</name>
</gene>
<evidence type="ECO:0000255" key="1">
    <source>
        <dbReference type="HAMAP-Rule" id="MF_00391"/>
    </source>
</evidence>
<evidence type="ECO:0000305" key="2"/>
<keyword id="KW-0687">Ribonucleoprotein</keyword>
<keyword id="KW-0689">Ribosomal protein</keyword>
<organism>
    <name type="scientific">Salmonella agona (strain SL483)</name>
    <dbReference type="NCBI Taxonomy" id="454166"/>
    <lineage>
        <taxon>Bacteria</taxon>
        <taxon>Pseudomonadati</taxon>
        <taxon>Pseudomonadota</taxon>
        <taxon>Gammaproteobacteria</taxon>
        <taxon>Enterobacterales</taxon>
        <taxon>Enterobacteriaceae</taxon>
        <taxon>Salmonella</taxon>
    </lineage>
</organism>
<sequence>MKRTFQPSVLKRNRSHGFRARMATKNGRQVLARRRAKGRARLTVSK</sequence>
<dbReference type="EMBL" id="CP001138">
    <property type="protein sequence ID" value="ACH50710.1"/>
    <property type="molecule type" value="Genomic_DNA"/>
</dbReference>
<dbReference type="RefSeq" id="WP_000831330.1">
    <property type="nucleotide sequence ID" value="NC_011149.1"/>
</dbReference>
<dbReference type="SMR" id="B5EYX3"/>
<dbReference type="GeneID" id="98190980"/>
<dbReference type="KEGG" id="sea:SeAg_B4067"/>
<dbReference type="HOGENOM" id="CLU_129938_2_1_6"/>
<dbReference type="Proteomes" id="UP000008819">
    <property type="component" value="Chromosome"/>
</dbReference>
<dbReference type="GO" id="GO:1990904">
    <property type="term" value="C:ribonucleoprotein complex"/>
    <property type="evidence" value="ECO:0007669"/>
    <property type="project" value="UniProtKB-KW"/>
</dbReference>
<dbReference type="GO" id="GO:0005840">
    <property type="term" value="C:ribosome"/>
    <property type="evidence" value="ECO:0007669"/>
    <property type="project" value="UniProtKB-KW"/>
</dbReference>
<dbReference type="GO" id="GO:0003735">
    <property type="term" value="F:structural constituent of ribosome"/>
    <property type="evidence" value="ECO:0007669"/>
    <property type="project" value="InterPro"/>
</dbReference>
<dbReference type="GO" id="GO:0006412">
    <property type="term" value="P:translation"/>
    <property type="evidence" value="ECO:0007669"/>
    <property type="project" value="UniProtKB-UniRule"/>
</dbReference>
<dbReference type="FunFam" id="1.10.287.3980:FF:000001">
    <property type="entry name" value="Mitochondrial ribosomal protein L34"/>
    <property type="match status" value="1"/>
</dbReference>
<dbReference type="Gene3D" id="1.10.287.3980">
    <property type="match status" value="1"/>
</dbReference>
<dbReference type="HAMAP" id="MF_00391">
    <property type="entry name" value="Ribosomal_bL34"/>
    <property type="match status" value="1"/>
</dbReference>
<dbReference type="InterPro" id="IPR000271">
    <property type="entry name" value="Ribosomal_bL34"/>
</dbReference>
<dbReference type="InterPro" id="IPR020939">
    <property type="entry name" value="Ribosomal_bL34_CS"/>
</dbReference>
<dbReference type="NCBIfam" id="TIGR01030">
    <property type="entry name" value="rpmH_bact"/>
    <property type="match status" value="1"/>
</dbReference>
<dbReference type="PANTHER" id="PTHR14503:SF4">
    <property type="entry name" value="LARGE RIBOSOMAL SUBUNIT PROTEIN BL34M"/>
    <property type="match status" value="1"/>
</dbReference>
<dbReference type="PANTHER" id="PTHR14503">
    <property type="entry name" value="MITOCHONDRIAL RIBOSOMAL PROTEIN 34 FAMILY MEMBER"/>
    <property type="match status" value="1"/>
</dbReference>
<dbReference type="Pfam" id="PF00468">
    <property type="entry name" value="Ribosomal_L34"/>
    <property type="match status" value="1"/>
</dbReference>
<dbReference type="PROSITE" id="PS00784">
    <property type="entry name" value="RIBOSOMAL_L34"/>
    <property type="match status" value="1"/>
</dbReference>
<name>RL34_SALA4</name>
<accession>B5EYX3</accession>
<feature type="chain" id="PRO_1000196099" description="Large ribosomal subunit protein bL34">
    <location>
        <begin position="1"/>
        <end position="46"/>
    </location>
</feature>
<reference key="1">
    <citation type="journal article" date="2011" name="J. Bacteriol.">
        <title>Comparative genomics of 28 Salmonella enterica isolates: evidence for CRISPR-mediated adaptive sublineage evolution.</title>
        <authorList>
            <person name="Fricke W.F."/>
            <person name="Mammel M.K."/>
            <person name="McDermott P.F."/>
            <person name="Tartera C."/>
            <person name="White D.G."/>
            <person name="Leclerc J.E."/>
            <person name="Ravel J."/>
            <person name="Cebula T.A."/>
        </authorList>
    </citation>
    <scope>NUCLEOTIDE SEQUENCE [LARGE SCALE GENOMIC DNA]</scope>
    <source>
        <strain>SL483</strain>
    </source>
</reference>